<gene>
    <name evidence="10" type="primary">SUB1</name>
    <name evidence="14" type="ORF">CK202_3597</name>
    <name evidence="13" type="ORF">PFNF54_00901</name>
</gene>
<evidence type="ECO:0000250" key="1">
    <source>
        <dbReference type="UniProtKB" id="O61142"/>
    </source>
</evidence>
<evidence type="ECO:0000250" key="2">
    <source>
        <dbReference type="UniProtKB" id="Q8I0V0"/>
    </source>
</evidence>
<evidence type="ECO:0000255" key="3"/>
<evidence type="ECO:0000255" key="4">
    <source>
        <dbReference type="PROSITE-ProRule" id="PRU00498"/>
    </source>
</evidence>
<evidence type="ECO:0000255" key="5">
    <source>
        <dbReference type="PROSITE-ProRule" id="PRU01240"/>
    </source>
</evidence>
<evidence type="ECO:0000255" key="6">
    <source>
        <dbReference type="RuleBase" id="RU003355"/>
    </source>
</evidence>
<evidence type="ECO:0000256" key="7">
    <source>
        <dbReference type="SAM" id="MobiDB-lite"/>
    </source>
</evidence>
<evidence type="ECO:0000269" key="8">
    <source>
    </source>
</evidence>
<evidence type="ECO:0000269" key="9">
    <source>
    </source>
</evidence>
<evidence type="ECO:0000303" key="10">
    <source>
    </source>
</evidence>
<evidence type="ECO:0000303" key="11">
    <source>
    </source>
</evidence>
<evidence type="ECO:0000305" key="12"/>
<evidence type="ECO:0000312" key="13">
    <source>
        <dbReference type="EMBL" id="EWC90279.1"/>
    </source>
</evidence>
<evidence type="ECO:0000312" key="14">
    <source>
        <dbReference type="EMBL" id="PKC45911.1"/>
    </source>
</evidence>
<evidence type="ECO:0000312" key="15">
    <source>
        <dbReference type="Proteomes" id="UP000030673"/>
    </source>
</evidence>
<evidence type="ECO:0000312" key="16">
    <source>
        <dbReference type="Proteomes" id="UP000232684"/>
    </source>
</evidence>
<reference evidence="15" key="1">
    <citation type="submission" date="2013-02" db="EMBL/GenBank/DDBJ databases">
        <title>The Genome Sequence of Plasmodium falciparum NF54.</title>
        <authorList>
            <consortium name="The Broad Institute Genome Sequencing Platform"/>
            <consortium name="The Broad Institute Genome Sequencing Center for Infectious Disease"/>
            <person name="Neafsey D."/>
            <person name="Cheeseman I."/>
            <person name="Volkman S."/>
            <person name="Adams J."/>
            <person name="Walker B."/>
            <person name="Young S.K."/>
            <person name="Zeng Q."/>
            <person name="Gargeya S."/>
            <person name="Fitzgerald M."/>
            <person name="Haas B."/>
            <person name="Abouelleil A."/>
            <person name="Alvarado L."/>
            <person name="Arachchi H.M."/>
            <person name="Berlin A.M."/>
            <person name="Chapman S.B."/>
            <person name="Dewar J."/>
            <person name="Goldberg J."/>
            <person name="Griggs A."/>
            <person name="Gujja S."/>
            <person name="Hansen M."/>
            <person name="Howarth C."/>
            <person name="Imamovic A."/>
            <person name="Larimer J."/>
            <person name="McCowan C."/>
            <person name="Murphy C."/>
            <person name="Neiman D."/>
            <person name="Pearson M."/>
            <person name="Priest M."/>
            <person name="Roberts A."/>
            <person name="Saif S."/>
            <person name="Shea T."/>
            <person name="Sisk P."/>
            <person name="Sykes S."/>
            <person name="Wortman J."/>
            <person name="Nusbaum C."/>
            <person name="Birren B."/>
        </authorList>
    </citation>
    <scope>NUCLEOTIDE SEQUENCE [LARGE SCALE GENOMIC DNA]</scope>
    <source>
        <strain evidence="15">NF54</strain>
    </source>
</reference>
<reference evidence="16" key="2">
    <citation type="submission" date="2017-11" db="EMBL/GenBank/DDBJ databases">
        <title>Plasmodium falciparum NF54 genome assembly.</title>
        <authorList>
            <person name="Bryant J.M."/>
            <person name="Baumgarten S."/>
            <person name="Scheidig-Benatar C."/>
            <person name="Scherf A."/>
        </authorList>
    </citation>
    <scope>NUCLEOTIDE SEQUENCE [LARGE SCALE GENOMIC DNA]</scope>
    <source>
        <strain evidence="14">NF54</strain>
    </source>
</reference>
<reference evidence="12" key="3">
    <citation type="journal article" date="2017" name="Science">
        <title>Plasmepsins IX and X are essential and druggable mediators of malaria parasite egress and invasion.</title>
        <authorList>
            <person name="Nasamu A.S."/>
            <person name="Glushakova S."/>
            <person name="Russo I."/>
            <person name="Vaupel B."/>
            <person name="Oksman A."/>
            <person name="Kim A.S."/>
            <person name="Fremont D.H."/>
            <person name="Tolia N."/>
            <person name="Beck J.R."/>
            <person name="Meyers M.J."/>
            <person name="Niles J.C."/>
            <person name="Zimmerberg J."/>
            <person name="Goldberg D.E."/>
        </authorList>
    </citation>
    <scope>SUBCELLULAR LOCATION</scope>
    <scope>DEVELOPMENTAL STAGE</scope>
    <scope>PROTEOLYTIC CLEAVAGE</scope>
</reference>
<reference key="4">
    <citation type="journal article" date="2023" name="MBio">
        <title>Activation of the Plasmodium Egress Effector Subtilisin-Like Protease 1 Is Mediated by Plasmepsin X Destruction of the Prodomain.</title>
        <authorList>
            <person name="Mukherjee S."/>
            <person name="Nasamu A.S."/>
            <person name="Rubiano K.C."/>
            <person name="Goldberg D.E."/>
        </authorList>
    </citation>
    <scope>SUBUNIT</scope>
    <scope>PROTEOLYTIC CLEAVAGE BY PMX</scope>
    <scope>PROTEOLYTIC CLEAVAGE BY AUTOCATALYSIS</scope>
    <scope>CLEAVAGE SITES</scope>
    <scope>MUTAGENESIS OF VAL-214; ASP-217; 244-LEU--ASP-249; 244-LEU-GLU-245; VAL-246 AND ASP-249</scope>
</reference>
<organism evidence="15">
    <name type="scientific">Plasmodium falciparum (isolate NF54)</name>
    <dbReference type="NCBI Taxonomy" id="5843"/>
    <lineage>
        <taxon>Eukaryota</taxon>
        <taxon>Sar</taxon>
        <taxon>Alveolata</taxon>
        <taxon>Apicomplexa</taxon>
        <taxon>Aconoidasida</taxon>
        <taxon>Haemosporida</taxon>
        <taxon>Plasmodiidae</taxon>
        <taxon>Plasmodium</taxon>
        <taxon>Plasmodium (Laverania)</taxon>
    </lineage>
</organism>
<feature type="signal peptide" evidence="1">
    <location>
        <begin position="1"/>
        <end position="25"/>
    </location>
</feature>
<feature type="propeptide" id="PRO_0000450202" description="Inhibition peptide" evidence="1">
    <location>
        <begin position="26"/>
        <end position="217"/>
    </location>
</feature>
<feature type="chain" id="PRO_5014109794" description="Subtilisin-like protease 1" evidence="3">
    <location>
        <begin position="218"/>
        <end position="688"/>
    </location>
</feature>
<feature type="domain" description="Peptidase S8" evidence="5">
    <location>
        <begin position="343"/>
        <end position="661"/>
    </location>
</feature>
<feature type="region of interest" description="Disordered" evidence="7">
    <location>
        <begin position="99"/>
        <end position="129"/>
    </location>
</feature>
<feature type="region of interest" description="Disordered" evidence="7">
    <location>
        <begin position="264"/>
        <end position="284"/>
    </location>
</feature>
<feature type="region of interest" description="Disordered" evidence="7">
    <location>
        <begin position="303"/>
        <end position="332"/>
    </location>
</feature>
<feature type="compositionally biased region" description="Low complexity" evidence="7">
    <location>
        <begin position="106"/>
        <end position="122"/>
    </location>
</feature>
<feature type="compositionally biased region" description="Low complexity" evidence="7">
    <location>
        <begin position="303"/>
        <end position="328"/>
    </location>
</feature>
<feature type="active site" description="Charge relay system" evidence="5">
    <location>
        <position position="372"/>
    </location>
</feature>
<feature type="active site" description="Charge relay system" evidence="5">
    <location>
        <position position="428"/>
    </location>
</feature>
<feature type="active site" description="Charge relay system" evidence="5">
    <location>
        <position position="606"/>
    </location>
</feature>
<feature type="binding site" evidence="2">
    <location>
        <position position="145"/>
    </location>
    <ligand>
        <name>Ca(2+)</name>
        <dbReference type="ChEBI" id="CHEBI:29108"/>
        <label>4</label>
    </ligand>
</feature>
<feature type="binding site" evidence="2">
    <location>
        <position position="148"/>
    </location>
    <ligand>
        <name>Ca(2+)</name>
        <dbReference type="ChEBI" id="CHEBI:29108"/>
        <label>4</label>
    </ligand>
</feature>
<feature type="binding site" evidence="2">
    <location>
        <position position="150"/>
    </location>
    <ligand>
        <name>Ca(2+)</name>
        <dbReference type="ChEBI" id="CHEBI:29108"/>
        <label>4</label>
    </ligand>
</feature>
<feature type="binding site" evidence="2">
    <location>
        <position position="205"/>
    </location>
    <ligand>
        <name>Ca(2+)</name>
        <dbReference type="ChEBI" id="CHEBI:29108"/>
        <label>4</label>
    </ligand>
</feature>
<feature type="binding site" evidence="1">
    <location>
        <position position="338"/>
    </location>
    <ligand>
        <name>Ca(2+)</name>
        <dbReference type="ChEBI" id="CHEBI:29108"/>
        <label>1</label>
    </ligand>
</feature>
<feature type="binding site" evidence="1">
    <location>
        <position position="381"/>
    </location>
    <ligand>
        <name>Ca(2+)</name>
        <dbReference type="ChEBI" id="CHEBI:29108"/>
        <label>1</label>
    </ligand>
</feature>
<feature type="binding site" evidence="1">
    <location>
        <position position="392"/>
    </location>
    <ligand>
        <name>Ca(2+)</name>
        <dbReference type="ChEBI" id="CHEBI:29108"/>
        <label>2</label>
    </ligand>
</feature>
<feature type="binding site" evidence="1">
    <location>
        <position position="392"/>
    </location>
    <ligand>
        <name>Ca(2+)</name>
        <dbReference type="ChEBI" id="CHEBI:29108"/>
        <label>3</label>
    </ligand>
</feature>
<feature type="binding site" evidence="1">
    <location>
        <position position="396"/>
    </location>
    <ligand>
        <name>Ca(2+)</name>
        <dbReference type="ChEBI" id="CHEBI:29108"/>
        <label>2</label>
    </ligand>
</feature>
<feature type="binding site" evidence="1">
    <location>
        <position position="399"/>
    </location>
    <ligand>
        <name>Ca(2+)</name>
        <dbReference type="ChEBI" id="CHEBI:29108"/>
        <label>2</label>
    </ligand>
</feature>
<feature type="binding site" evidence="1">
    <location>
        <position position="400"/>
    </location>
    <ligand>
        <name>Ca(2+)</name>
        <dbReference type="ChEBI" id="CHEBI:29108"/>
        <label>3</label>
    </ligand>
</feature>
<feature type="binding site" evidence="1">
    <location>
        <position position="401"/>
    </location>
    <ligand>
        <name>Ca(2+)</name>
        <dbReference type="ChEBI" id="CHEBI:29108"/>
        <label>2</label>
    </ligand>
</feature>
<feature type="binding site" evidence="1">
    <location>
        <position position="402"/>
    </location>
    <ligand>
        <name>Ca(2+)</name>
        <dbReference type="ChEBI" id="CHEBI:29108"/>
        <label>3</label>
    </ligand>
</feature>
<feature type="binding site" evidence="1">
    <location>
        <position position="404"/>
    </location>
    <ligand>
        <name>Ca(2+)</name>
        <dbReference type="ChEBI" id="CHEBI:29108"/>
        <label>3</label>
    </ligand>
</feature>
<feature type="binding site" evidence="1">
    <location>
        <position position="406"/>
    </location>
    <ligand>
        <name>Ca(2+)</name>
        <dbReference type="ChEBI" id="CHEBI:29108"/>
        <label>3</label>
    </ligand>
</feature>
<feature type="binding site" evidence="1">
    <location>
        <position position="408"/>
    </location>
    <ligand>
        <name>Ca(2+)</name>
        <dbReference type="ChEBI" id="CHEBI:29108"/>
        <label>2</label>
    </ligand>
</feature>
<feature type="binding site" evidence="1">
    <location>
        <position position="409"/>
    </location>
    <ligand>
        <name>Ca(2+)</name>
        <dbReference type="ChEBI" id="CHEBI:29108"/>
        <label>3</label>
    </ligand>
</feature>
<feature type="binding site" evidence="1">
    <location>
        <position position="439"/>
    </location>
    <ligand>
        <name>Ca(2+)</name>
        <dbReference type="ChEBI" id="CHEBI:29108"/>
        <label>1</label>
    </ligand>
</feature>
<feature type="binding site" evidence="1">
    <location>
        <position position="442"/>
    </location>
    <ligand>
        <name>Ca(2+)</name>
        <dbReference type="ChEBI" id="CHEBI:29108"/>
        <label>1</label>
    </ligand>
</feature>
<feature type="binding site" evidence="1">
    <location>
        <position position="444"/>
    </location>
    <ligand>
        <name>Ca(2+)</name>
        <dbReference type="ChEBI" id="CHEBI:29108"/>
        <label>1</label>
    </ligand>
</feature>
<feature type="binding site" evidence="1">
    <location>
        <position position="446"/>
    </location>
    <ligand>
        <name>Ca(2+)</name>
        <dbReference type="ChEBI" id="CHEBI:29108"/>
        <label>1</label>
    </ligand>
</feature>
<feature type="site" description="Cleavage; by PMX" evidence="9">
    <location>
        <begin position="49"/>
        <end position="50"/>
    </location>
</feature>
<feature type="site" description="Cleavage; by PMX" evidence="2">
    <location>
        <begin position="152"/>
        <end position="153"/>
    </location>
</feature>
<feature type="site" description="Cleavage; by PMX" evidence="9">
    <location>
        <begin position="165"/>
        <end position="166"/>
    </location>
</feature>
<feature type="site" description="Cleavage; by autolysis" evidence="1">
    <location>
        <begin position="217"/>
        <end position="218"/>
    </location>
</feature>
<feature type="site" description="Cleavage; by PMX" evidence="2">
    <location>
        <begin position="243"/>
        <end position="244"/>
    </location>
</feature>
<feature type="site" description="Cleavage" evidence="1">
    <location>
        <begin position="249"/>
        <end position="250"/>
    </location>
</feature>
<feature type="glycosylation site" description="N-linked (GlcNAc...) asparagine" evidence="4">
    <location>
        <position position="112"/>
    </location>
</feature>
<feature type="glycosylation site" description="N-linked (GlcNAc...) asparagine" evidence="4">
    <location>
        <position position="171"/>
    </location>
</feature>
<feature type="glycosylation site" description="N-linked (GlcNAc...) asparagine" evidence="4">
    <location>
        <position position="261"/>
    </location>
</feature>
<feature type="glycosylation site" description="N-linked (GlcNAc...) asparagine" evidence="4">
    <location>
        <position position="317"/>
    </location>
</feature>
<feature type="glycosylation site" description="N-linked (GlcNAc...) asparagine" evidence="4">
    <location>
        <position position="322"/>
    </location>
</feature>
<feature type="glycosylation site" description="N-linked (GlcNAc...) asparagine" evidence="4">
    <location>
        <position position="417"/>
    </location>
</feature>
<feature type="glycosylation site" description="N-linked (GlcNAc...) asparagine" evidence="4">
    <location>
        <position position="488"/>
    </location>
</feature>
<feature type="glycosylation site" description="N-linked (GlcNAc...) asparagine" evidence="4">
    <location>
        <position position="501"/>
    </location>
</feature>
<feature type="glycosylation site" description="N-linked (GlcNAc...) asparagine" evidence="4">
    <location>
        <position position="520"/>
    </location>
</feature>
<feature type="glycosylation site" description="N-linked (GlcNAc...) asparagine" evidence="4">
    <location>
        <position position="603"/>
    </location>
</feature>
<feature type="glycosylation site" description="N-linked (GlcNAc...) asparagine" evidence="4">
    <location>
        <position position="675"/>
    </location>
</feature>
<feature type="disulfide bond" evidence="1">
    <location>
        <begin position="369"/>
        <end position="479"/>
    </location>
</feature>
<feature type="disulfide bond" evidence="1">
    <location>
        <begin position="458"/>
        <end position="475"/>
    </location>
</feature>
<feature type="disulfide bond" evidence="1">
    <location>
        <begin position="521"/>
        <end position="534"/>
    </location>
</feature>
<feature type="mutagenesis site" description="Results in accumulation of inactive precursor p82 form; when associated with L-217." evidence="9">
    <original>V</original>
    <variation>K</variation>
    <location>
        <position position="214"/>
    </location>
</feature>
<feature type="mutagenesis site" description="Results in accumulation of inactive precursor p82 form; when associated with K-214." evidence="9">
    <original>D</original>
    <variation>L</variation>
    <location>
        <position position="217"/>
    </location>
</feature>
<feature type="mutagenesis site" description="Blocks the p54-to-p47 conversion." evidence="9">
    <original>LEVEND</original>
    <variation>AAKENL</variation>
    <location>
        <begin position="244"/>
        <end position="249"/>
    </location>
</feature>
<feature type="mutagenesis site" description="Results in inefficient conversion of p54 to p47." evidence="9">
    <original>LE</original>
    <variation>AA</variation>
    <location>
        <begin position="244"/>
        <end position="245"/>
    </location>
</feature>
<feature type="mutagenesis site" description="Results in inefficient conversion of p54 to p47; when associated with L-249." evidence="9">
    <original>V</original>
    <variation>K</variation>
    <location>
        <position position="246"/>
    </location>
</feature>
<feature type="mutagenesis site" description="Results in inefficient conversion of p54 to p47; when associated with K-246." evidence="9">
    <original>D</original>
    <variation>L</variation>
    <location>
        <position position="249"/>
    </location>
</feature>
<sequence>MMLNKKVVALCTLTLHLFCIFLCLGKEVRSEENGKIQDDAKKIVSELRFLEKVEDVIEKSNIGGNEVDADENSFNPDTEVPIEEIEEIKMRELKDVKEEKNKNDNHNNNNNNISSSSSSSSNTFGEEKEEVSKKKKKLRLIVSENHATTPSFFQESLLEPDVLSFLESKGNLSNLKNINSMIIELKEDTTDDELISYIKILEEKGALIESDKLVSADNIDISGIKDAIRRGEENIDVNDYKSMLEVENDAEDYDKMFGMFNESHAATSKRKRHSTNERGYDTFSSPSYKTYSKSDYLYDDDNNNNNYYYSHSSNGHNSSSRNSSSSRSRPGKYHFNDEFRNLQWGLDLSRLDETQELINEHQVMSTRICVIDSGIDYNHPDLKDNIELNLKELHGRKGFDDDNNGIVDDIYGANFVNNSGNPMDDNYHGTHVSGIISAIGNNNIGVVGVDVNSKLIICKALDEHKLGRLGDMFKCLDYCISRNAHMINGSFSFDEYSGIFNSSVEYLQRKGILFFVSASNCSHPKSSTPDIRKCDLSINAKYPPILSTVYDNVISVANLKKNDNNNHYSLSINSFYSNKYCQLAAPGTNIYSTAPHNSYRKLNGTSMAAPHVAAIASLIFSINPDLSYKKVIQILKDSIVYLPSLKNMVAWAGYADINKAVNLAIKSKKTYINSNISNKWKKKSRYLH</sequence>
<accession>W7K9M0</accession>
<keyword id="KW-0106">Calcium</keyword>
<keyword id="KW-1015">Disulfide bond</keyword>
<keyword id="KW-0325">Glycoprotein</keyword>
<keyword id="KW-0378">Hydrolase</keyword>
<keyword id="KW-0479">Metal-binding</keyword>
<keyword id="KW-0645">Protease</keyword>
<keyword id="KW-1185">Reference proteome</keyword>
<keyword id="KW-0964">Secreted</keyword>
<keyword id="KW-0720">Serine protease</keyword>
<keyword id="KW-0732">Signal</keyword>
<keyword id="KW-0865">Zymogen</keyword>
<proteinExistence type="evidence at protein level"/>
<protein>
    <recommendedName>
        <fullName evidence="10 11">Subtilisin-like protease 1</fullName>
        <ecNumber evidence="2">3.4.21.62</ecNumber>
    </recommendedName>
    <alternativeName>
        <fullName evidence="11">PfSUB1</fullName>
    </alternativeName>
</protein>
<comment type="function">
    <text evidence="2">Serine protease which plays an essential role in merozoite invasion of and egress from host erythrocytes by processing and activating various merozoite surface and parasitophorous vacuole proteins. Mediates the proteolytic maturation of serine proteases SERA4, SERA5 and SERA6 just prior to merozoite egress. Prior to merozoite egress, cleaves merozoite surface proteins MSP1, MSP6 and MSP7, which form the MSP1/6/7 complex, and thereby may prime the parasite cell surface for invasion of fresh erythrocytes. Prior to merozoite egress, cleaves MSRP2 converting it to MSRP2 p25 form, and RAP1 converting it to RAP1 p67 form.</text>
</comment>
<comment type="catalytic activity">
    <reaction evidence="2">
        <text>Hydrolysis of proteins with broad specificity for peptide bonds, and a preference for a large uncharged residue in P1. Hydrolyzes peptide amides.</text>
        <dbReference type="EC" id="3.4.21.62"/>
    </reaction>
</comment>
<comment type="cofactor">
    <cofactor evidence="1">
        <name>Ca(2+)</name>
        <dbReference type="ChEBI" id="CHEBI:29108"/>
    </cofactor>
    <text evidence="1">Binds 3 Ca(2+) ions per subunit.</text>
</comment>
<comment type="activity regulation">
    <text evidence="2">p54 and probably p47 forms are inhibited by the non-covalent interaction with the cleaved propeptide (By similarity). Inhibited by subtilisin propeptide-like protein SUB1-ProM (By similarity).</text>
</comment>
<comment type="subunit">
    <text evidence="2 9">Heterodimer between p54 form and prodomain p31; the interaction inhibits p54 catalytic activity (PubMed:37036362). Heterodimer p31-p54 is monomeric at basic pH and dimeric at acidic pH; dimerization is driven by the N-terminal prodomain (p31) (By similarity).</text>
</comment>
<comment type="subcellular location">
    <subcellularLocation>
        <location evidence="2">Secreted</location>
    </subcellularLocation>
    <subcellularLocation>
        <location evidence="2">Parasitophorous vacuole lumen</location>
    </subcellularLocation>
    <text evidence="2 8">At the schizont stage, in merozoites, localizes to dense secretory granules called exonemes (PubMed:29074774). Just prior to egress secreted into the parasitophorous vacuole (By similarity).</text>
</comment>
<comment type="developmental stage">
    <text evidence="8">Expressed during the parasite blood stage, specifically in schizonts (at protein level).</text>
</comment>
<comment type="PTM">
    <text evidence="1 8 9">The prodomain (p31) is cleaved, likely by autocatalysis, during the transport to or in the Golgi apparatus, and remains non-covalently associated with the p54 form as an inhibitor (PubMed:37036362). p54 is further cleaved into the p47 form (PubMed:37036362). This cleavage is likely occurring in the exoneme prior to egress and is mediated by PMX/plasmepsin X (PubMed:29074774, PubMed:37036362). The p54-to-p47 conversion can be also autocatalytic (PubMed:37036362). Heterodimer p31-p54 is activated by cleavage of prodomain (p31) by the aspartic protease PMX; cleavage by PMX abolishes inhibitory capacity of p31 (PubMed:37036362). Primary autocatalytic processing of SUB1 is essential for parasite growth; the p54-to-p47 conversion is dispensable for SUB1 functions in the parasites (PubMed:37036362).</text>
</comment>
<comment type="PTM">
    <text evidence="1">The disulfide bond between Cys-521 and Cys-534 acts as a redox-sensitive disulfide switch. The oxidized form is required for catalytic activity.</text>
</comment>
<comment type="PTM">
    <text evidence="1">The relevance of N-glycosylation is not clear. In an insect expression system, SUB1 glycosylation appears to affect its processing into the active mature form suggesting that SUB1 may not be N-glycosylated in parasites.</text>
</comment>
<comment type="similarity">
    <text evidence="6">Belongs to the peptidase S8 family.</text>
</comment>
<dbReference type="EC" id="3.4.21.62" evidence="2"/>
<dbReference type="EMBL" id="KE123753">
    <property type="protein sequence ID" value="EWC90279.1"/>
    <property type="molecule type" value="Genomic_DNA"/>
</dbReference>
<dbReference type="EMBL" id="NYMT01000012">
    <property type="protein sequence ID" value="PKC45911.1"/>
    <property type="molecule type" value="Genomic_DNA"/>
</dbReference>
<dbReference type="SMR" id="W7K9M0"/>
<dbReference type="MEROPS" id="S08.012"/>
<dbReference type="GlyCosmos" id="W7K9M0">
    <property type="glycosylation" value="11 sites, No reported glycans"/>
</dbReference>
<dbReference type="EnsemblProtists" id="EWC90279">
    <property type="protein sequence ID" value="EWC90279"/>
    <property type="gene ID" value="PFNF54_00901"/>
</dbReference>
<dbReference type="VEuPathDB" id="PlasmoDB:PfNF54_050011800"/>
<dbReference type="OMA" id="YRNLQWG"/>
<dbReference type="Proteomes" id="UP000030673">
    <property type="component" value="Unassembled WGS sequence"/>
</dbReference>
<dbReference type="Proteomes" id="UP000232684">
    <property type="component" value="Unassembled WGS sequence"/>
</dbReference>
<dbReference type="GO" id="GO:0005576">
    <property type="term" value="C:extracellular region"/>
    <property type="evidence" value="ECO:0007669"/>
    <property type="project" value="UniProtKB-SubCell"/>
</dbReference>
<dbReference type="GO" id="GO:0046872">
    <property type="term" value="F:metal ion binding"/>
    <property type="evidence" value="ECO:0007669"/>
    <property type="project" value="UniProtKB-KW"/>
</dbReference>
<dbReference type="GO" id="GO:0004252">
    <property type="term" value="F:serine-type endopeptidase activity"/>
    <property type="evidence" value="ECO:0007669"/>
    <property type="project" value="UniProtKB-EC"/>
</dbReference>
<dbReference type="GO" id="GO:0006508">
    <property type="term" value="P:proteolysis"/>
    <property type="evidence" value="ECO:0007669"/>
    <property type="project" value="UniProtKB-KW"/>
</dbReference>
<dbReference type="CDD" id="cd07473">
    <property type="entry name" value="Peptidases_S8_Subtilisin_like"/>
    <property type="match status" value="1"/>
</dbReference>
<dbReference type="FunFam" id="3.40.50.200:FF:000023">
    <property type="entry name" value="Subtilisin-like protease 1"/>
    <property type="match status" value="1"/>
</dbReference>
<dbReference type="Gene3D" id="3.30.70.2380">
    <property type="match status" value="1"/>
</dbReference>
<dbReference type="Gene3D" id="3.40.50.200">
    <property type="entry name" value="Peptidase S8/S53 domain"/>
    <property type="match status" value="1"/>
</dbReference>
<dbReference type="InterPro" id="IPR017314">
    <property type="entry name" value="Pept_S8A_PfSUB_1"/>
</dbReference>
<dbReference type="InterPro" id="IPR000209">
    <property type="entry name" value="Peptidase_S8/S53_dom"/>
</dbReference>
<dbReference type="InterPro" id="IPR036852">
    <property type="entry name" value="Peptidase_S8/S53_dom_sf"/>
</dbReference>
<dbReference type="InterPro" id="IPR051048">
    <property type="entry name" value="Peptidase_S8/S53_subtilisin"/>
</dbReference>
<dbReference type="InterPro" id="IPR023827">
    <property type="entry name" value="Peptidase_S8_Asp-AS"/>
</dbReference>
<dbReference type="InterPro" id="IPR022398">
    <property type="entry name" value="Peptidase_S8_His-AS"/>
</dbReference>
<dbReference type="InterPro" id="IPR023828">
    <property type="entry name" value="Peptidase_S8_Ser-AS"/>
</dbReference>
<dbReference type="InterPro" id="IPR015500">
    <property type="entry name" value="Peptidase_S8_subtilisin-rel"/>
</dbReference>
<dbReference type="InterPro" id="IPR034204">
    <property type="entry name" value="PfSUB1-like_cat_dom"/>
</dbReference>
<dbReference type="InterPro" id="IPR041089">
    <property type="entry name" value="SUB1_ProdP9"/>
</dbReference>
<dbReference type="PANTHER" id="PTHR43399:SF4">
    <property type="entry name" value="CELL WALL-ASSOCIATED PROTEASE"/>
    <property type="match status" value="1"/>
</dbReference>
<dbReference type="PANTHER" id="PTHR43399">
    <property type="entry name" value="SUBTILISIN-RELATED"/>
    <property type="match status" value="1"/>
</dbReference>
<dbReference type="Pfam" id="PF00082">
    <property type="entry name" value="Peptidase_S8"/>
    <property type="match status" value="1"/>
</dbReference>
<dbReference type="Pfam" id="PF18213">
    <property type="entry name" value="SUB1_ProdP9"/>
    <property type="match status" value="1"/>
</dbReference>
<dbReference type="PIRSF" id="PIRSF037900">
    <property type="entry name" value="Subtilisin_rel_PfSUB_1"/>
    <property type="match status" value="1"/>
</dbReference>
<dbReference type="PRINTS" id="PR00723">
    <property type="entry name" value="SUBTILISIN"/>
</dbReference>
<dbReference type="SUPFAM" id="SSF52743">
    <property type="entry name" value="Subtilisin-like"/>
    <property type="match status" value="1"/>
</dbReference>
<dbReference type="PROSITE" id="PS51892">
    <property type="entry name" value="SUBTILASE"/>
    <property type="match status" value="1"/>
</dbReference>
<dbReference type="PROSITE" id="PS00136">
    <property type="entry name" value="SUBTILASE_ASP"/>
    <property type="match status" value="1"/>
</dbReference>
<dbReference type="PROSITE" id="PS00137">
    <property type="entry name" value="SUBTILASE_HIS"/>
    <property type="match status" value="1"/>
</dbReference>
<dbReference type="PROSITE" id="PS00138">
    <property type="entry name" value="SUBTILASE_SER"/>
    <property type="match status" value="1"/>
</dbReference>
<name>SUB1_PLAFO</name>